<name>RL31_SHISS</name>
<feature type="chain" id="PRO_0000259229" description="Large ribosomal subunit protein bL31">
    <location>
        <begin position="1"/>
        <end position="70"/>
    </location>
</feature>
<feature type="binding site" evidence="1">
    <location>
        <position position="16"/>
    </location>
    <ligand>
        <name>Zn(2+)</name>
        <dbReference type="ChEBI" id="CHEBI:29105"/>
    </ligand>
</feature>
<feature type="binding site" evidence="1">
    <location>
        <position position="18"/>
    </location>
    <ligand>
        <name>Zn(2+)</name>
        <dbReference type="ChEBI" id="CHEBI:29105"/>
    </ligand>
</feature>
<feature type="binding site" evidence="1">
    <location>
        <position position="37"/>
    </location>
    <ligand>
        <name>Zn(2+)</name>
        <dbReference type="ChEBI" id="CHEBI:29105"/>
    </ligand>
</feature>
<feature type="binding site" evidence="1">
    <location>
        <position position="40"/>
    </location>
    <ligand>
        <name>Zn(2+)</name>
        <dbReference type="ChEBI" id="CHEBI:29105"/>
    </ligand>
</feature>
<feature type="modified residue" description="N6-acetyllysine" evidence="1">
    <location>
        <position position="8"/>
    </location>
</feature>
<protein>
    <recommendedName>
        <fullName evidence="1">Large ribosomal subunit protein bL31</fullName>
    </recommendedName>
    <alternativeName>
        <fullName evidence="2">50S ribosomal protein L31</fullName>
    </alternativeName>
</protein>
<evidence type="ECO:0000255" key="1">
    <source>
        <dbReference type="HAMAP-Rule" id="MF_00501"/>
    </source>
</evidence>
<evidence type="ECO:0000305" key="2"/>
<accession>Q3YV42</accession>
<comment type="function">
    <text evidence="1">Binds the 23S rRNA.</text>
</comment>
<comment type="cofactor">
    <cofactor evidence="1">
        <name>Zn(2+)</name>
        <dbReference type="ChEBI" id="CHEBI:29105"/>
    </cofactor>
    <text evidence="1">Binds 1 zinc ion per subunit.</text>
</comment>
<comment type="subunit">
    <text evidence="1">Part of the 50S ribosomal subunit.</text>
</comment>
<comment type="similarity">
    <text evidence="1">Belongs to the bacterial ribosomal protein bL31 family. Type A subfamily.</text>
</comment>
<reference key="1">
    <citation type="journal article" date="2005" name="Nucleic Acids Res.">
        <title>Genome dynamics and diversity of Shigella species, the etiologic agents of bacillary dysentery.</title>
        <authorList>
            <person name="Yang F."/>
            <person name="Yang J."/>
            <person name="Zhang X."/>
            <person name="Chen L."/>
            <person name="Jiang Y."/>
            <person name="Yan Y."/>
            <person name="Tang X."/>
            <person name="Wang J."/>
            <person name="Xiong Z."/>
            <person name="Dong J."/>
            <person name="Xue Y."/>
            <person name="Zhu Y."/>
            <person name="Xu X."/>
            <person name="Sun L."/>
            <person name="Chen S."/>
            <person name="Nie H."/>
            <person name="Peng J."/>
            <person name="Xu J."/>
            <person name="Wang Y."/>
            <person name="Yuan Z."/>
            <person name="Wen Y."/>
            <person name="Yao Z."/>
            <person name="Shen Y."/>
            <person name="Qiang B."/>
            <person name="Hou Y."/>
            <person name="Yu J."/>
            <person name="Jin Q."/>
        </authorList>
    </citation>
    <scope>NUCLEOTIDE SEQUENCE [LARGE SCALE GENOMIC DNA]</scope>
    <source>
        <strain>Ss046</strain>
    </source>
</reference>
<proteinExistence type="inferred from homology"/>
<dbReference type="EMBL" id="CP000038">
    <property type="protein sequence ID" value="AAZ90620.1"/>
    <property type="molecule type" value="Genomic_DNA"/>
</dbReference>
<dbReference type="RefSeq" id="WP_000710769.1">
    <property type="nucleotide sequence ID" value="NC_007384.1"/>
</dbReference>
<dbReference type="SMR" id="Q3YV42"/>
<dbReference type="GeneID" id="93777962"/>
<dbReference type="KEGG" id="ssn:SSON_4105"/>
<dbReference type="HOGENOM" id="CLU_114306_4_3_6"/>
<dbReference type="Proteomes" id="UP000002529">
    <property type="component" value="Chromosome"/>
</dbReference>
<dbReference type="GO" id="GO:1990904">
    <property type="term" value="C:ribonucleoprotein complex"/>
    <property type="evidence" value="ECO:0007669"/>
    <property type="project" value="UniProtKB-KW"/>
</dbReference>
<dbReference type="GO" id="GO:0005840">
    <property type="term" value="C:ribosome"/>
    <property type="evidence" value="ECO:0007669"/>
    <property type="project" value="UniProtKB-KW"/>
</dbReference>
<dbReference type="GO" id="GO:0046872">
    <property type="term" value="F:metal ion binding"/>
    <property type="evidence" value="ECO:0007669"/>
    <property type="project" value="UniProtKB-KW"/>
</dbReference>
<dbReference type="GO" id="GO:0019843">
    <property type="term" value="F:rRNA binding"/>
    <property type="evidence" value="ECO:0007669"/>
    <property type="project" value="UniProtKB-KW"/>
</dbReference>
<dbReference type="GO" id="GO:0003735">
    <property type="term" value="F:structural constituent of ribosome"/>
    <property type="evidence" value="ECO:0007669"/>
    <property type="project" value="InterPro"/>
</dbReference>
<dbReference type="GO" id="GO:0006412">
    <property type="term" value="P:translation"/>
    <property type="evidence" value="ECO:0007669"/>
    <property type="project" value="UniProtKB-UniRule"/>
</dbReference>
<dbReference type="FunFam" id="4.10.830.30:FF:000001">
    <property type="entry name" value="50S ribosomal protein L31"/>
    <property type="match status" value="1"/>
</dbReference>
<dbReference type="Gene3D" id="4.10.830.30">
    <property type="entry name" value="Ribosomal protein L31"/>
    <property type="match status" value="1"/>
</dbReference>
<dbReference type="HAMAP" id="MF_00501">
    <property type="entry name" value="Ribosomal_bL31_1"/>
    <property type="match status" value="1"/>
</dbReference>
<dbReference type="InterPro" id="IPR034704">
    <property type="entry name" value="Ribosomal_bL28/bL31-like_sf"/>
</dbReference>
<dbReference type="InterPro" id="IPR002150">
    <property type="entry name" value="Ribosomal_bL31"/>
</dbReference>
<dbReference type="InterPro" id="IPR027491">
    <property type="entry name" value="Ribosomal_bL31_A"/>
</dbReference>
<dbReference type="InterPro" id="IPR042105">
    <property type="entry name" value="Ribosomal_bL31_sf"/>
</dbReference>
<dbReference type="NCBIfam" id="TIGR00105">
    <property type="entry name" value="L31"/>
    <property type="match status" value="1"/>
</dbReference>
<dbReference type="NCBIfam" id="NF000612">
    <property type="entry name" value="PRK00019.1"/>
    <property type="match status" value="1"/>
</dbReference>
<dbReference type="NCBIfam" id="NF001809">
    <property type="entry name" value="PRK00528.1"/>
    <property type="match status" value="1"/>
</dbReference>
<dbReference type="PANTHER" id="PTHR33280">
    <property type="entry name" value="50S RIBOSOMAL PROTEIN L31, CHLOROPLASTIC"/>
    <property type="match status" value="1"/>
</dbReference>
<dbReference type="PANTHER" id="PTHR33280:SF6">
    <property type="entry name" value="LARGE RIBOSOMAL SUBUNIT PROTEIN BL31A"/>
    <property type="match status" value="1"/>
</dbReference>
<dbReference type="Pfam" id="PF01197">
    <property type="entry name" value="Ribosomal_L31"/>
    <property type="match status" value="1"/>
</dbReference>
<dbReference type="PRINTS" id="PR01249">
    <property type="entry name" value="RIBOSOMALL31"/>
</dbReference>
<dbReference type="SUPFAM" id="SSF143800">
    <property type="entry name" value="L28p-like"/>
    <property type="match status" value="1"/>
</dbReference>
<dbReference type="PROSITE" id="PS01143">
    <property type="entry name" value="RIBOSOMAL_L31"/>
    <property type="match status" value="1"/>
</dbReference>
<keyword id="KW-0007">Acetylation</keyword>
<keyword id="KW-0479">Metal-binding</keyword>
<keyword id="KW-1185">Reference proteome</keyword>
<keyword id="KW-0687">Ribonucleoprotein</keyword>
<keyword id="KW-0689">Ribosomal protein</keyword>
<keyword id="KW-0694">RNA-binding</keyword>
<keyword id="KW-0699">rRNA-binding</keyword>
<keyword id="KW-0862">Zinc</keyword>
<organism>
    <name type="scientific">Shigella sonnei (strain Ss046)</name>
    <dbReference type="NCBI Taxonomy" id="300269"/>
    <lineage>
        <taxon>Bacteria</taxon>
        <taxon>Pseudomonadati</taxon>
        <taxon>Pseudomonadota</taxon>
        <taxon>Gammaproteobacteria</taxon>
        <taxon>Enterobacterales</taxon>
        <taxon>Enterobacteriaceae</taxon>
        <taxon>Shigella</taxon>
    </lineage>
</organism>
<gene>
    <name evidence="1" type="primary">rpmE</name>
    <name type="ordered locus">SSON_4105</name>
</gene>
<sequence length="70" mass="7871">MKKDIHPKYEEITASCSCGNVMKIRSTVGHDLNLDVCSKCHPFFTGKQRDVATGGRVDRFNKRFNIPGSK</sequence>